<comment type="function">
    <text evidence="1 4">RNA chaperone that plays a key role in telomere maintenance and RNA localization to Cajal bodies (PubMed:29804836). Specifically recognizes and binds the Cajal body box (CAB box) present in both small Cajal body RNAs (scaRNAs) and telomerase RNA template component (TERC) (PubMed:29804836). Essential component of the telomerase holoenzyme complex, a ribonucleoprotein complex essential for the replication of chromosome termini that elongates telomeres in most eukaryotes (By similarity). In the telomerase holoenzyme complex, required to stimulate the catalytic activity of the complex (PubMed:29804836). Acts by specifically binding the CAB box of the TERC RNA and controlling the folding of the CR4/CR5 region of the TERC RNA, a critical step for telomerase activity (By similarity). In addition, also controls telomerase holoenzyme complex localization to Cajal body (By similarity). During S phase, required for delivery of TERC to telomeres during S phase and for telomerase activity (By similarity). In addition to its role in telomere maintenance, also required for Cajal body formation, probably by mediating localization of scaRNAs to Cajal bodies (By similarity). Also plays a role in DNA repair: phosphorylated by ATM in response to DNA damage and relocalizes to sites of DNA double-strand breaks to promote the repair of DNA double-strand breaks (By similarity). Acts by recruiting the ubiquitin ligase RNF8 to DNA breaks and promote both homologous recombination (HR) and non-homologous end joining (NHEJ) (By similarity).</text>
</comment>
<comment type="subunit">
    <text evidence="1">Component of the telomerase holoenzyme complex composed of one molecule of TERT, one molecule of WRAP53/TCAB1, two molecules of H/ACA ribonucleoprotein complex subunits DKC1, NOP10, NHP2 and GAR1, and a telomerase RNA template component (TERC). The telomerase holoenzyme complex is associated with TEP1, SMG6/EST1A and POT1. Interacts with the chaperonin-containing T-complex (TRiC) complex; which mediates the folding of WRAP53/TCAB1. Interacts with COIL. Interacts with SMN1. Interacts with RNF8. Interacts with histone H2AX.</text>
</comment>
<comment type="subcellular location">
    <subcellularLocation>
        <location evidence="1">Nucleus</location>
        <location evidence="1">Cajal body</location>
    </subcellularLocation>
    <subcellularLocation>
        <location evidence="1">Chromosome</location>
        <location evidence="1">Telomere</location>
    </subcellularLocation>
    <subcellularLocation>
        <location evidence="1">Chromosome</location>
    </subcellularLocation>
    <text evidence="1">Released from telomerase RNA template component (TERC) in mitotic cells coincident with delocalization from Cajal bodies. In response to DNA damage, localizes to sites of DNA double-strand breaks following phosphorylation by ATM.</text>
</comment>
<comment type="PTM">
    <text evidence="1">Phosphorylated at Ser-61 by ATM in response to DNA damage, promoting its interaction with histone H2AX and localization to sites of DNA double-strand breaks.</text>
</comment>
<comment type="similarity">
    <text evidence="5">Belongs to the TCAB1 family.</text>
</comment>
<evidence type="ECO:0000250" key="1">
    <source>
        <dbReference type="UniProtKB" id="Q9BUR4"/>
    </source>
</evidence>
<evidence type="ECO:0000255" key="2"/>
<evidence type="ECO:0000256" key="3">
    <source>
        <dbReference type="SAM" id="MobiDB-lite"/>
    </source>
</evidence>
<evidence type="ECO:0000269" key="4">
    <source>
    </source>
</evidence>
<evidence type="ECO:0000305" key="5"/>
<evidence type="ECO:0000312" key="6">
    <source>
        <dbReference type="MGI" id="MGI:2384933"/>
    </source>
</evidence>
<dbReference type="EMBL" id="AL731687">
    <property type="protein sequence ID" value="CAI52013.1"/>
    <property type="molecule type" value="Genomic_DNA"/>
</dbReference>
<dbReference type="EMBL" id="BC021790">
    <property type="protein sequence ID" value="AAH21790.1"/>
    <property type="molecule type" value="mRNA"/>
</dbReference>
<dbReference type="EMBL" id="BC069868">
    <property type="protein sequence ID" value="AAH69868.1"/>
    <property type="molecule type" value="mRNA"/>
</dbReference>
<dbReference type="CCDS" id="CCDS24897.1"/>
<dbReference type="RefSeq" id="NP_001351698.1">
    <property type="nucleotide sequence ID" value="NM_001364769.1"/>
</dbReference>
<dbReference type="RefSeq" id="NP_659073.1">
    <property type="nucleotide sequence ID" value="NM_144824.3"/>
</dbReference>
<dbReference type="SMR" id="Q8VC51"/>
<dbReference type="FunCoup" id="Q8VC51">
    <property type="interactions" value="3857"/>
</dbReference>
<dbReference type="STRING" id="10090.ENSMUSP00000047825"/>
<dbReference type="iPTMnet" id="Q8VC51"/>
<dbReference type="PhosphoSitePlus" id="Q8VC51"/>
<dbReference type="jPOST" id="Q8VC51"/>
<dbReference type="PaxDb" id="10090-ENSMUSP00000047825"/>
<dbReference type="PeptideAtlas" id="Q8VC51"/>
<dbReference type="ProteomicsDB" id="297838"/>
<dbReference type="Pumba" id="Q8VC51"/>
<dbReference type="Antibodypedia" id="24336">
    <property type="antibodies" value="86 antibodies from 23 providers"/>
</dbReference>
<dbReference type="DNASU" id="216853"/>
<dbReference type="Ensembl" id="ENSMUST00000048139.12">
    <property type="protein sequence ID" value="ENSMUSP00000047825.6"/>
    <property type="gene ID" value="ENSMUSG00000041346.12"/>
</dbReference>
<dbReference type="GeneID" id="216853"/>
<dbReference type="KEGG" id="mmu:216853"/>
<dbReference type="UCSC" id="uc007jqj.1">
    <property type="organism name" value="mouse"/>
</dbReference>
<dbReference type="AGR" id="MGI:2384933"/>
<dbReference type="CTD" id="55135"/>
<dbReference type="MGI" id="MGI:2384933">
    <property type="gene designation" value="Wrap53"/>
</dbReference>
<dbReference type="VEuPathDB" id="HostDB:ENSMUSG00000041346"/>
<dbReference type="eggNOG" id="KOG2919">
    <property type="taxonomic scope" value="Eukaryota"/>
</dbReference>
<dbReference type="GeneTree" id="ENSGT00390000010169"/>
<dbReference type="HOGENOM" id="CLU_022731_1_1_1"/>
<dbReference type="InParanoid" id="Q8VC51"/>
<dbReference type="OMA" id="IRTWILP"/>
<dbReference type="OrthoDB" id="239865at2759"/>
<dbReference type="PhylomeDB" id="Q8VC51"/>
<dbReference type="TreeFam" id="TF315169"/>
<dbReference type="Reactome" id="R-MMU-171319">
    <property type="pathway name" value="Telomere Extension By Telomerase"/>
</dbReference>
<dbReference type="BioGRID-ORCS" id="216853">
    <property type="hits" value="26 hits in 81 CRISPR screens"/>
</dbReference>
<dbReference type="ChiTaRS" id="Wrap53">
    <property type="organism name" value="mouse"/>
</dbReference>
<dbReference type="PRO" id="PR:Q8VC51"/>
<dbReference type="Proteomes" id="UP000000589">
    <property type="component" value="Chromosome 11"/>
</dbReference>
<dbReference type="RNAct" id="Q8VC51">
    <property type="molecule type" value="protein"/>
</dbReference>
<dbReference type="Bgee" id="ENSMUSG00000041346">
    <property type="expression patterns" value="Expressed in embryonic cell in blastocyst and 185 other cell types or tissues"/>
</dbReference>
<dbReference type="ExpressionAtlas" id="Q8VC51">
    <property type="expression patterns" value="baseline and differential"/>
</dbReference>
<dbReference type="GO" id="GO:0015030">
    <property type="term" value="C:Cajal body"/>
    <property type="evidence" value="ECO:0000250"/>
    <property type="project" value="UniProtKB"/>
</dbReference>
<dbReference type="GO" id="GO:0000781">
    <property type="term" value="C:chromosome, telomeric region"/>
    <property type="evidence" value="ECO:0007669"/>
    <property type="project" value="UniProtKB-SubCell"/>
</dbReference>
<dbReference type="GO" id="GO:0005829">
    <property type="term" value="C:cytosol"/>
    <property type="evidence" value="ECO:0007669"/>
    <property type="project" value="Ensembl"/>
</dbReference>
<dbReference type="GO" id="GO:0035861">
    <property type="term" value="C:site of double-strand break"/>
    <property type="evidence" value="ECO:0000250"/>
    <property type="project" value="UniProtKB"/>
</dbReference>
<dbReference type="GO" id="GO:0005697">
    <property type="term" value="C:telomerase holoenzyme complex"/>
    <property type="evidence" value="ECO:0000250"/>
    <property type="project" value="UniProtKB"/>
</dbReference>
<dbReference type="GO" id="GO:0042393">
    <property type="term" value="F:histone binding"/>
    <property type="evidence" value="ECO:0007669"/>
    <property type="project" value="Ensembl"/>
</dbReference>
<dbReference type="GO" id="GO:0042802">
    <property type="term" value="F:identical protein binding"/>
    <property type="evidence" value="ECO:0007669"/>
    <property type="project" value="Ensembl"/>
</dbReference>
<dbReference type="GO" id="GO:0140597">
    <property type="term" value="F:protein carrier chaperone"/>
    <property type="evidence" value="ECO:0007669"/>
    <property type="project" value="Ensembl"/>
</dbReference>
<dbReference type="GO" id="GO:0044877">
    <property type="term" value="F:protein-containing complex binding"/>
    <property type="evidence" value="ECO:0007669"/>
    <property type="project" value="Ensembl"/>
</dbReference>
<dbReference type="GO" id="GO:0051087">
    <property type="term" value="F:protein-folding chaperone binding"/>
    <property type="evidence" value="ECO:0007669"/>
    <property type="project" value="Ensembl"/>
</dbReference>
<dbReference type="GO" id="GO:0003723">
    <property type="term" value="F:RNA binding"/>
    <property type="evidence" value="ECO:0000250"/>
    <property type="project" value="UniProtKB"/>
</dbReference>
<dbReference type="GO" id="GO:0140691">
    <property type="term" value="F:RNA folding chaperone"/>
    <property type="evidence" value="ECO:0000314"/>
    <property type="project" value="UniProtKB"/>
</dbReference>
<dbReference type="GO" id="GO:0070034">
    <property type="term" value="F:telomerase RNA binding"/>
    <property type="evidence" value="ECO:0000250"/>
    <property type="project" value="UniProtKB"/>
</dbReference>
<dbReference type="GO" id="GO:0031625">
    <property type="term" value="F:ubiquitin protein ligase binding"/>
    <property type="evidence" value="ECO:0007669"/>
    <property type="project" value="Ensembl"/>
</dbReference>
<dbReference type="GO" id="GO:0030576">
    <property type="term" value="P:Cajal body organization"/>
    <property type="evidence" value="ECO:0000250"/>
    <property type="project" value="UniProtKB"/>
</dbReference>
<dbReference type="GO" id="GO:0006281">
    <property type="term" value="P:DNA repair"/>
    <property type="evidence" value="ECO:0007669"/>
    <property type="project" value="UniProtKB-KW"/>
</dbReference>
<dbReference type="GO" id="GO:0045739">
    <property type="term" value="P:positive regulation of DNA repair"/>
    <property type="evidence" value="ECO:0000250"/>
    <property type="project" value="UniProtKB"/>
</dbReference>
<dbReference type="GO" id="GO:2000781">
    <property type="term" value="P:positive regulation of double-strand break repair"/>
    <property type="evidence" value="ECO:0000250"/>
    <property type="project" value="UniProtKB"/>
</dbReference>
<dbReference type="GO" id="GO:1905168">
    <property type="term" value="P:positive regulation of double-strand break repair via homologous recombination"/>
    <property type="evidence" value="ECO:0000250"/>
    <property type="project" value="UniProtKB"/>
</dbReference>
<dbReference type="GO" id="GO:2001034">
    <property type="term" value="P:positive regulation of double-strand break repair via nonhomologous end joining"/>
    <property type="evidence" value="ECO:0000250"/>
    <property type="project" value="UniProtKB"/>
</dbReference>
<dbReference type="GO" id="GO:1904851">
    <property type="term" value="P:positive regulation of establishment of protein localization to telomere"/>
    <property type="evidence" value="ECO:0007669"/>
    <property type="project" value="Ensembl"/>
</dbReference>
<dbReference type="GO" id="GO:0032212">
    <property type="term" value="P:positive regulation of telomere maintenance via telomerase"/>
    <property type="evidence" value="ECO:0007669"/>
    <property type="project" value="Ensembl"/>
</dbReference>
<dbReference type="GO" id="GO:1904867">
    <property type="term" value="P:protein localization to Cajal body"/>
    <property type="evidence" value="ECO:0000250"/>
    <property type="project" value="UniProtKB"/>
</dbReference>
<dbReference type="GO" id="GO:0034337">
    <property type="term" value="P:RNA folding"/>
    <property type="evidence" value="ECO:0000250"/>
    <property type="project" value="UniProtKB"/>
</dbReference>
<dbReference type="GO" id="GO:0090666">
    <property type="term" value="P:scaRNA localization to Cajal body"/>
    <property type="evidence" value="ECO:0000250"/>
    <property type="project" value="UniProtKB"/>
</dbReference>
<dbReference type="GO" id="GO:0090671">
    <property type="term" value="P:telomerase RNA localization to Cajal body"/>
    <property type="evidence" value="ECO:0007669"/>
    <property type="project" value="Ensembl"/>
</dbReference>
<dbReference type="GO" id="GO:0032203">
    <property type="term" value="P:telomere formation via telomerase"/>
    <property type="evidence" value="ECO:0000250"/>
    <property type="project" value="UniProtKB"/>
</dbReference>
<dbReference type="GO" id="GO:0007004">
    <property type="term" value="P:telomere maintenance via telomerase"/>
    <property type="evidence" value="ECO:0000250"/>
    <property type="project" value="UniProtKB"/>
</dbReference>
<dbReference type="FunFam" id="2.130.10.10:FF:000453">
    <property type="entry name" value="Telomerase Cajal body protein 1"/>
    <property type="match status" value="1"/>
</dbReference>
<dbReference type="Gene3D" id="2.130.10.10">
    <property type="entry name" value="YVTN repeat-like/Quinoprotein amine dehydrogenase"/>
    <property type="match status" value="1"/>
</dbReference>
<dbReference type="InterPro" id="IPR051150">
    <property type="entry name" value="SWT21/TCAB1_mRNA_Telomere"/>
</dbReference>
<dbReference type="InterPro" id="IPR015943">
    <property type="entry name" value="WD40/YVTN_repeat-like_dom_sf"/>
</dbReference>
<dbReference type="InterPro" id="IPR036322">
    <property type="entry name" value="WD40_repeat_dom_sf"/>
</dbReference>
<dbReference type="InterPro" id="IPR001680">
    <property type="entry name" value="WD40_rpt"/>
</dbReference>
<dbReference type="PANTHER" id="PTHR13211">
    <property type="entry name" value="TELOMERASE CAJAL BODY PROTEIN 1"/>
    <property type="match status" value="1"/>
</dbReference>
<dbReference type="PANTHER" id="PTHR13211:SF0">
    <property type="entry name" value="TELOMERASE CAJAL BODY PROTEIN 1"/>
    <property type="match status" value="1"/>
</dbReference>
<dbReference type="Pfam" id="PF00400">
    <property type="entry name" value="WD40"/>
    <property type="match status" value="4"/>
</dbReference>
<dbReference type="SMART" id="SM00320">
    <property type="entry name" value="WD40"/>
    <property type="match status" value="5"/>
</dbReference>
<dbReference type="SUPFAM" id="SSF50978">
    <property type="entry name" value="WD40 repeat-like"/>
    <property type="match status" value="1"/>
</dbReference>
<dbReference type="PROSITE" id="PS50294">
    <property type="entry name" value="WD_REPEATS_REGION"/>
    <property type="match status" value="1"/>
</dbReference>
<organism>
    <name type="scientific">Mus musculus</name>
    <name type="common">Mouse</name>
    <dbReference type="NCBI Taxonomy" id="10090"/>
    <lineage>
        <taxon>Eukaryota</taxon>
        <taxon>Metazoa</taxon>
        <taxon>Chordata</taxon>
        <taxon>Craniata</taxon>
        <taxon>Vertebrata</taxon>
        <taxon>Euteleostomi</taxon>
        <taxon>Mammalia</taxon>
        <taxon>Eutheria</taxon>
        <taxon>Euarchontoglires</taxon>
        <taxon>Glires</taxon>
        <taxon>Rodentia</taxon>
        <taxon>Myomorpha</taxon>
        <taxon>Muroidea</taxon>
        <taxon>Muridae</taxon>
        <taxon>Murinae</taxon>
        <taxon>Mus</taxon>
        <taxon>Mus</taxon>
    </lineage>
</organism>
<sequence>MKTSEERLLAPDSLPPDLAPAPVPQGSPAEKNTDFEPVPPPCGGDDQPQLATDPVASLVVSQELQQGDSVPLEVEFNTSSELSPGIEEQDVSEHASLPGEETNLPELESGEATEGVSEERAEVDEGDTFWTYSFSQVPRYLSGSWSEFSTRSENFLKGCKWAPDGSCILTNSADNVLRIYNLPPELYSEQEQVDYAEMVPVLRMVEGDTIYDYCWYSLMSSTQPDTSYVASSSRENPIHIWDAFTGELRASFRAYNHLDELTAAHSLCFSPDGSQLFCGFNRTVRVFSTSRPGRDCEVRATFAKKQGQSGIISCIAFSPSQPLYACGSYGRTIGLYAWDDGSPLALLGGHQGGITHLCFHPDGNLFFSGARKDAELLCWDLRQPGHLLWSLSREVTTNQRIYFDLDPSGQFLVSGNTSGVVSVWDISGALSDDSKLEPVVTFLPQKDCTNGVSLHPTLPLLATASGQRVFPEPTNSGDEGELELELPLLSLCHAHPECQLQLWWCGGGPDPSSPVDDQDEKGQRRTEAVGMS</sequence>
<accession>Q8VC51</accession>
<reference key="1">
    <citation type="journal article" date="2009" name="PLoS Biol.">
        <title>Lineage-specific biology revealed by a finished genome assembly of the mouse.</title>
        <authorList>
            <person name="Church D.M."/>
            <person name="Goodstadt L."/>
            <person name="Hillier L.W."/>
            <person name="Zody M.C."/>
            <person name="Goldstein S."/>
            <person name="She X."/>
            <person name="Bult C.J."/>
            <person name="Agarwala R."/>
            <person name="Cherry J.L."/>
            <person name="DiCuccio M."/>
            <person name="Hlavina W."/>
            <person name="Kapustin Y."/>
            <person name="Meric P."/>
            <person name="Maglott D."/>
            <person name="Birtle Z."/>
            <person name="Marques A.C."/>
            <person name="Graves T."/>
            <person name="Zhou S."/>
            <person name="Teague B."/>
            <person name="Potamousis K."/>
            <person name="Churas C."/>
            <person name="Place M."/>
            <person name="Herschleb J."/>
            <person name="Runnheim R."/>
            <person name="Forrest D."/>
            <person name="Amos-Landgraf J."/>
            <person name="Schwartz D.C."/>
            <person name="Cheng Z."/>
            <person name="Lindblad-Toh K."/>
            <person name="Eichler E.E."/>
            <person name="Ponting C.P."/>
        </authorList>
    </citation>
    <scope>NUCLEOTIDE SEQUENCE [LARGE SCALE GENOMIC DNA]</scope>
    <source>
        <strain>C57BL/6J</strain>
    </source>
</reference>
<reference key="2">
    <citation type="journal article" date="2004" name="Genome Res.">
        <title>The status, quality, and expansion of the NIH full-length cDNA project: the Mammalian Gene Collection (MGC).</title>
        <authorList>
            <consortium name="The MGC Project Team"/>
        </authorList>
    </citation>
    <scope>NUCLEOTIDE SEQUENCE [LARGE SCALE MRNA]</scope>
    <source>
        <strain>FVB/N</strain>
        <tissue>Kidney</tissue>
        <tissue>Liver</tissue>
    </source>
</reference>
<reference key="3">
    <citation type="journal article" date="2018" name="Cell">
        <title>An Activity Switch in Human Telomerase Based on RNA Conformation and Shaped by TCAB1.</title>
        <authorList>
            <person name="Chen L."/>
            <person name="Roake C.M."/>
            <person name="Freund A."/>
            <person name="Batista P.J."/>
            <person name="Tian S."/>
            <person name="Yin Y.A."/>
            <person name="Gajera C.R."/>
            <person name="Lin S."/>
            <person name="Lee B."/>
            <person name="Pech M.F."/>
            <person name="Venteicher A.S."/>
            <person name="Das R."/>
            <person name="Chang H.Y."/>
            <person name="Artandi S.E."/>
        </authorList>
    </citation>
    <scope>FUNCTION</scope>
    <scope>RNA-BINDING</scope>
</reference>
<feature type="chain" id="PRO_0000242697" description="Telomerase Cajal body protein 1">
    <location>
        <begin position="1"/>
        <end position="532"/>
    </location>
</feature>
<feature type="repeat" description="WD 1" evidence="2">
    <location>
        <begin position="151"/>
        <end position="190"/>
    </location>
</feature>
<feature type="repeat" description="WD 2" evidence="2">
    <location>
        <begin position="206"/>
        <end position="251"/>
    </location>
</feature>
<feature type="repeat" description="WD 3" evidence="2">
    <location>
        <begin position="256"/>
        <end position="297"/>
    </location>
</feature>
<feature type="repeat" description="WD 4" evidence="2">
    <location>
        <begin position="307"/>
        <end position="348"/>
    </location>
</feature>
<feature type="repeat" description="WD 5" evidence="2">
    <location>
        <begin position="349"/>
        <end position="389"/>
    </location>
</feature>
<feature type="repeat" description="WD 6" evidence="2">
    <location>
        <begin position="395"/>
        <end position="434"/>
    </location>
</feature>
<feature type="region of interest" description="Disordered" evidence="3">
    <location>
        <begin position="1"/>
        <end position="53"/>
    </location>
</feature>
<feature type="region of interest" description="Disordered" evidence="3">
    <location>
        <begin position="80"/>
        <end position="122"/>
    </location>
</feature>
<feature type="region of interest" description="Disordered" evidence="3">
    <location>
        <begin position="510"/>
        <end position="532"/>
    </location>
</feature>
<feature type="compositionally biased region" description="Pro residues" evidence="3">
    <location>
        <begin position="13"/>
        <end position="25"/>
    </location>
</feature>
<feature type="compositionally biased region" description="Basic and acidic residues" evidence="3">
    <location>
        <begin position="520"/>
        <end position="532"/>
    </location>
</feature>
<feature type="modified residue" description="Phosphoserine" evidence="1">
    <location>
        <position position="27"/>
    </location>
</feature>
<feature type="modified residue" description="Phosphoserine" evidence="1">
    <location>
        <position position="61"/>
    </location>
</feature>
<feature type="modified residue" description="Phosphoserine" evidence="1">
    <location>
        <position position="83"/>
    </location>
</feature>
<feature type="modified residue" description="Phosphothreonine" evidence="1">
    <location>
        <position position="474"/>
    </location>
</feature>
<feature type="modified residue" description="Phosphoserine" evidence="1">
    <location>
        <position position="476"/>
    </location>
</feature>
<gene>
    <name evidence="6" type="primary">Wrap53</name>
    <name evidence="1" type="synonym">Tcab1</name>
    <name evidence="1" type="synonym">Wdr79</name>
</gene>
<protein>
    <recommendedName>
        <fullName evidence="1">Telomerase Cajal body protein 1</fullName>
    </recommendedName>
    <alternativeName>
        <fullName evidence="1">WD repeat-containing protein 79</fullName>
    </alternativeName>
    <alternativeName>
        <fullName evidence="1">WD40 repeat-containing protein antisense to TP53 gene homolog</fullName>
    </alternativeName>
</protein>
<keyword id="KW-0143">Chaperone</keyword>
<keyword id="KW-0158">Chromosome</keyword>
<keyword id="KW-0227">DNA damage</keyword>
<keyword id="KW-0234">DNA repair</keyword>
<keyword id="KW-0539">Nucleus</keyword>
<keyword id="KW-0597">Phosphoprotein</keyword>
<keyword id="KW-1185">Reference proteome</keyword>
<keyword id="KW-0677">Repeat</keyword>
<keyword id="KW-0694">RNA-binding</keyword>
<keyword id="KW-0779">Telomere</keyword>
<keyword id="KW-0853">WD repeat</keyword>
<name>TCAB1_MOUSE</name>
<proteinExistence type="evidence at protein level"/>